<protein>
    <recommendedName>
        <fullName evidence="4">Small ribosomal subunit protein mS35</fullName>
    </recommendedName>
    <alternativeName>
        <fullName>28S ribosomal protein S35, mitochondrial</fullName>
        <shortName>MRP-S35</shortName>
        <shortName>S35mt</shortName>
    </alternativeName>
</protein>
<evidence type="ECO:0000250" key="1">
    <source>
        <dbReference type="UniProtKB" id="Q2YDF6"/>
    </source>
</evidence>
<evidence type="ECO:0000255" key="2"/>
<evidence type="ECO:0000256" key="3">
    <source>
        <dbReference type="SAM" id="MobiDB-lite"/>
    </source>
</evidence>
<evidence type="ECO:0000305" key="4"/>
<dbReference type="EMBL" id="BC100132">
    <property type="protein sequence ID" value="AAI00133.1"/>
    <property type="molecule type" value="mRNA"/>
</dbReference>
<dbReference type="EMBL" id="BC082794">
    <property type="protein sequence ID" value="AAH82794.1"/>
    <property type="molecule type" value="mRNA"/>
</dbReference>
<dbReference type="RefSeq" id="NP_001026839.1">
    <property type="nucleotide sequence ID" value="NM_001031669.1"/>
</dbReference>
<dbReference type="SMR" id="Q498P2"/>
<dbReference type="FunCoup" id="Q498P2">
    <property type="interactions" value="1819"/>
</dbReference>
<dbReference type="STRING" id="7955.ENSDARP00000056120"/>
<dbReference type="PaxDb" id="7955-ENSDARP00000056120"/>
<dbReference type="GeneID" id="503880"/>
<dbReference type="KEGG" id="dre:503880"/>
<dbReference type="AGR" id="ZFIN:ZDB-GENE-050809-131"/>
<dbReference type="CTD" id="60488"/>
<dbReference type="ZFIN" id="ZDB-GENE-050809-131">
    <property type="gene designation" value="mrps35"/>
</dbReference>
<dbReference type="eggNOG" id="KOG3933">
    <property type="taxonomic scope" value="Eukaryota"/>
</dbReference>
<dbReference type="InParanoid" id="Q498P2"/>
<dbReference type="OrthoDB" id="283424at2759"/>
<dbReference type="PhylomeDB" id="Q498P2"/>
<dbReference type="Reactome" id="R-DRE-5389840">
    <property type="pathway name" value="Mitochondrial translation elongation"/>
</dbReference>
<dbReference type="Reactome" id="R-DRE-5419276">
    <property type="pathway name" value="Mitochondrial translation termination"/>
</dbReference>
<dbReference type="PRO" id="PR:Q498P2"/>
<dbReference type="Proteomes" id="UP000000437">
    <property type="component" value="Chromosome 25"/>
</dbReference>
<dbReference type="GO" id="GO:0005763">
    <property type="term" value="C:mitochondrial small ribosomal subunit"/>
    <property type="evidence" value="ECO:0000318"/>
    <property type="project" value="GO_Central"/>
</dbReference>
<dbReference type="GO" id="GO:0003735">
    <property type="term" value="F:structural constituent of ribosome"/>
    <property type="evidence" value="ECO:0000318"/>
    <property type="project" value="GO_Central"/>
</dbReference>
<dbReference type="GO" id="GO:0032543">
    <property type="term" value="P:mitochondrial translation"/>
    <property type="evidence" value="ECO:0007669"/>
    <property type="project" value="InterPro"/>
</dbReference>
<dbReference type="InterPro" id="IPR019349">
    <property type="entry name" value="Ribosomal_mS35_mit"/>
</dbReference>
<dbReference type="InterPro" id="IPR039848">
    <property type="entry name" value="Ribosomal_mS35_mt"/>
</dbReference>
<dbReference type="PANTHER" id="PTHR13490">
    <property type="entry name" value="MITOCHONDRIAL 28S RIBOSOMAL PROTEIN S28"/>
    <property type="match status" value="1"/>
</dbReference>
<dbReference type="PANTHER" id="PTHR13490:SF0">
    <property type="entry name" value="SMALL RIBOSOMAL SUBUNIT PROTEIN MS35"/>
    <property type="match status" value="1"/>
</dbReference>
<dbReference type="Pfam" id="PF10213">
    <property type="entry name" value="MRP-S28"/>
    <property type="match status" value="1"/>
</dbReference>
<name>RT35_DANRE</name>
<sequence>MAASVSHPALSSFHKISCNITGISGLISFSRRISVSSVLPTSAVAAKRDAAGKGVRGQMKPRRQAGEPRTERMAVDQDWTAVYPTAASFKPSAVPLPVRMGYPVNRGVPPAKHGNLELIKIPNFLHLTPATIKKHCEALKPFLTEWPSALDSDEKCTEHFPIQVQSKDFVSSGLSLRNPDARIVTLKVKHSSLNLDDHARKKMIKLAEKRYCKETDTLTITTDSCPLRQQNYDYAMYLLTVLYHESWKSEAWEQEKTRADMEEYEWQDSPSQRNILETLKSIRGTEETHELLDQPEVGEYRNSVTQMKNHGETEENLLRYKEAVKKLLQL</sequence>
<reference key="1">
    <citation type="submission" date="2005-08" db="EMBL/GenBank/DDBJ databases">
        <authorList>
            <consortium name="NIH - Zebrafish Gene Collection (ZGC) project"/>
        </authorList>
    </citation>
    <scope>NUCLEOTIDE SEQUENCE [LARGE SCALE MRNA]</scope>
    <source>
        <tissue>Eye</tissue>
    </source>
</reference>
<keyword id="KW-0496">Mitochondrion</keyword>
<keyword id="KW-1185">Reference proteome</keyword>
<keyword id="KW-0687">Ribonucleoprotein</keyword>
<keyword id="KW-0689">Ribosomal protein</keyword>
<keyword id="KW-0809">Transit peptide</keyword>
<accession>Q498P2</accession>
<accession>Q63ZW1</accession>
<organism>
    <name type="scientific">Danio rerio</name>
    <name type="common">Zebrafish</name>
    <name type="synonym">Brachydanio rerio</name>
    <dbReference type="NCBI Taxonomy" id="7955"/>
    <lineage>
        <taxon>Eukaryota</taxon>
        <taxon>Metazoa</taxon>
        <taxon>Chordata</taxon>
        <taxon>Craniata</taxon>
        <taxon>Vertebrata</taxon>
        <taxon>Euteleostomi</taxon>
        <taxon>Actinopterygii</taxon>
        <taxon>Neopterygii</taxon>
        <taxon>Teleostei</taxon>
        <taxon>Ostariophysi</taxon>
        <taxon>Cypriniformes</taxon>
        <taxon>Danionidae</taxon>
        <taxon>Danioninae</taxon>
        <taxon>Danio</taxon>
    </lineage>
</organism>
<feature type="transit peptide" description="Mitochondrion" evidence="2">
    <location>
        <begin position="1"/>
        <end status="unknown"/>
    </location>
</feature>
<feature type="chain" id="PRO_0000046057" description="Small ribosomal subunit protein mS35">
    <location>
        <begin status="unknown"/>
        <end position="330"/>
    </location>
</feature>
<feature type="region of interest" description="Disordered" evidence="3">
    <location>
        <begin position="50"/>
        <end position="73"/>
    </location>
</feature>
<feature type="compositionally biased region" description="Basic and acidic residues" evidence="3">
    <location>
        <begin position="64"/>
        <end position="73"/>
    </location>
</feature>
<feature type="sequence conflict" description="In Ref. 1; AAH82794." evidence="4" ref="1">
    <original>T</original>
    <variation>A</variation>
    <location>
        <position position="131"/>
    </location>
</feature>
<feature type="sequence conflict" description="In Ref. 1; AAH82794." evidence="4" ref="1">
    <original>G</original>
    <variation>E</variation>
    <location>
        <position position="298"/>
    </location>
</feature>
<proteinExistence type="evidence at transcript level"/>
<comment type="subunit">
    <text evidence="1">Component of the mitochondrial ribosome small subunit (28S) which comprises a 12S rRNA and about 30 distinct proteins.</text>
</comment>
<comment type="subcellular location">
    <subcellularLocation>
        <location evidence="1">Mitochondrion</location>
    </subcellularLocation>
</comment>
<comment type="similarity">
    <text evidence="4">Belongs to the mitochondrion-specific ribosomal protein mS35 family.</text>
</comment>
<gene>
    <name type="primary">mrps35</name>
    <name type="ORF">zgc:114150</name>
</gene>